<proteinExistence type="evidence at protein level"/>
<evidence type="ECO:0000255" key="1"/>
<evidence type="ECO:0000269" key="2">
    <source>
    </source>
</evidence>
<evidence type="ECO:0000269" key="3">
    <source>
    </source>
</evidence>
<evidence type="ECO:0000305" key="4"/>
<evidence type="ECO:0000305" key="5">
    <source>
    </source>
</evidence>
<gene>
    <name type="primary">MSK1</name>
    <name type="ordered locus">YNL073W</name>
    <name type="ORF">N2364</name>
</gene>
<accession>P32048</accession>
<accession>D6W1A6</accession>
<dbReference type="EC" id="6.1.1.6" evidence="5"/>
<dbReference type="EMBL" id="X57360">
    <property type="protein sequence ID" value="CAA40634.1"/>
    <property type="status" value="ALT_SEQ"/>
    <property type="molecule type" value="Genomic_DNA"/>
</dbReference>
<dbReference type="EMBL" id="X86470">
    <property type="protein sequence ID" value="CAA60187.1"/>
    <property type="molecule type" value="Genomic_DNA"/>
</dbReference>
<dbReference type="EMBL" id="Z71349">
    <property type="protein sequence ID" value="CAA95947.1"/>
    <property type="molecule type" value="Genomic_DNA"/>
</dbReference>
<dbReference type="EMBL" id="BK006947">
    <property type="protein sequence ID" value="DAA10472.1"/>
    <property type="molecule type" value="Genomic_DNA"/>
</dbReference>
<dbReference type="PIR" id="S14834">
    <property type="entry name" value="S14834"/>
</dbReference>
<dbReference type="RefSeq" id="NP_014326.1">
    <property type="nucleotide sequence ID" value="NM_001182911.1"/>
</dbReference>
<dbReference type="SMR" id="P32048"/>
<dbReference type="BioGRID" id="35750">
    <property type="interactions" value="137"/>
</dbReference>
<dbReference type="DIP" id="DIP-5319N"/>
<dbReference type="FunCoup" id="P32048">
    <property type="interactions" value="124"/>
</dbReference>
<dbReference type="IntAct" id="P32048">
    <property type="interactions" value="44"/>
</dbReference>
<dbReference type="MINT" id="P32048"/>
<dbReference type="STRING" id="4932.YNL073W"/>
<dbReference type="iPTMnet" id="P32048"/>
<dbReference type="PaxDb" id="4932-YNL073W"/>
<dbReference type="PeptideAtlas" id="P32048"/>
<dbReference type="EnsemblFungi" id="YNL073W_mRNA">
    <property type="protein sequence ID" value="YNL073W"/>
    <property type="gene ID" value="YNL073W"/>
</dbReference>
<dbReference type="GeneID" id="855651"/>
<dbReference type="KEGG" id="sce:YNL073W"/>
<dbReference type="AGR" id="SGD:S000005017"/>
<dbReference type="SGD" id="S000005017">
    <property type="gene designation" value="MSK1"/>
</dbReference>
<dbReference type="VEuPathDB" id="FungiDB:YNL073W"/>
<dbReference type="eggNOG" id="KOG1885">
    <property type="taxonomic scope" value="Eukaryota"/>
</dbReference>
<dbReference type="GeneTree" id="ENSGT01030000234618"/>
<dbReference type="HOGENOM" id="CLU_008255_6_0_1"/>
<dbReference type="InParanoid" id="P32048"/>
<dbReference type="OMA" id="MKWGMPP"/>
<dbReference type="OrthoDB" id="21243at2759"/>
<dbReference type="BioCyc" id="YEAST:G3O-33102-MONOMER"/>
<dbReference type="BRENDA" id="6.1.1.6">
    <property type="organism ID" value="984"/>
</dbReference>
<dbReference type="BioGRID-ORCS" id="855651">
    <property type="hits" value="7 hits in 10 CRISPR screens"/>
</dbReference>
<dbReference type="PRO" id="PR:P32048"/>
<dbReference type="Proteomes" id="UP000002311">
    <property type="component" value="Chromosome XIV"/>
</dbReference>
<dbReference type="RNAct" id="P32048">
    <property type="molecule type" value="protein"/>
</dbReference>
<dbReference type="GO" id="GO:0005737">
    <property type="term" value="C:cytoplasm"/>
    <property type="evidence" value="ECO:0000318"/>
    <property type="project" value="GO_Central"/>
</dbReference>
<dbReference type="GO" id="GO:0005759">
    <property type="term" value="C:mitochondrial matrix"/>
    <property type="evidence" value="ECO:0007669"/>
    <property type="project" value="UniProtKB-SubCell"/>
</dbReference>
<dbReference type="GO" id="GO:0005739">
    <property type="term" value="C:mitochondrion"/>
    <property type="evidence" value="ECO:0000314"/>
    <property type="project" value="SGD"/>
</dbReference>
<dbReference type="GO" id="GO:0005524">
    <property type="term" value="F:ATP binding"/>
    <property type="evidence" value="ECO:0007669"/>
    <property type="project" value="UniProtKB-KW"/>
</dbReference>
<dbReference type="GO" id="GO:0004824">
    <property type="term" value="F:lysine-tRNA ligase activity"/>
    <property type="evidence" value="ECO:0000315"/>
    <property type="project" value="SGD"/>
</dbReference>
<dbReference type="GO" id="GO:0000049">
    <property type="term" value="F:tRNA binding"/>
    <property type="evidence" value="ECO:0000318"/>
    <property type="project" value="GO_Central"/>
</dbReference>
<dbReference type="GO" id="GO:0006430">
    <property type="term" value="P:lysyl-tRNA aminoacylation"/>
    <property type="evidence" value="ECO:0000247"/>
    <property type="project" value="SGD"/>
</dbReference>
<dbReference type="GO" id="GO:0070154">
    <property type="term" value="P:mitochondrial lysyl-tRNA aminoacylation"/>
    <property type="evidence" value="ECO:0000315"/>
    <property type="project" value="SGD"/>
</dbReference>
<dbReference type="GO" id="GO:0032543">
    <property type="term" value="P:mitochondrial translation"/>
    <property type="evidence" value="ECO:0000315"/>
    <property type="project" value="SGD"/>
</dbReference>
<dbReference type="GO" id="GO:0008033">
    <property type="term" value="P:tRNA processing"/>
    <property type="evidence" value="ECO:0000314"/>
    <property type="project" value="SGD"/>
</dbReference>
<dbReference type="CDD" id="cd04322">
    <property type="entry name" value="LysRS_N"/>
    <property type="match status" value="1"/>
</dbReference>
<dbReference type="FunFam" id="2.40.50.140:FF:000473">
    <property type="entry name" value="Lysine--tRNA ligase"/>
    <property type="match status" value="1"/>
</dbReference>
<dbReference type="FunFam" id="3.30.930.10:FF:000148">
    <property type="entry name" value="Lysine--tRNA ligase"/>
    <property type="match status" value="1"/>
</dbReference>
<dbReference type="Gene3D" id="3.30.930.10">
    <property type="entry name" value="Bira Bifunctional Protein, Domain 2"/>
    <property type="match status" value="1"/>
</dbReference>
<dbReference type="Gene3D" id="2.40.50.140">
    <property type="entry name" value="Nucleic acid-binding proteins"/>
    <property type="match status" value="1"/>
</dbReference>
<dbReference type="InterPro" id="IPR004364">
    <property type="entry name" value="Aa-tRNA-synt_II"/>
</dbReference>
<dbReference type="InterPro" id="IPR006195">
    <property type="entry name" value="aa-tRNA-synth_II"/>
</dbReference>
<dbReference type="InterPro" id="IPR045864">
    <property type="entry name" value="aa-tRNA-synth_II/BPL/LPL"/>
</dbReference>
<dbReference type="InterPro" id="IPR002313">
    <property type="entry name" value="Lys-tRNA-ligase_II"/>
</dbReference>
<dbReference type="InterPro" id="IPR044136">
    <property type="entry name" value="Lys-tRNA-ligase_II_N"/>
</dbReference>
<dbReference type="InterPro" id="IPR018149">
    <property type="entry name" value="Lys-tRNA-synth_II_C"/>
</dbReference>
<dbReference type="InterPro" id="IPR012340">
    <property type="entry name" value="NA-bd_OB-fold"/>
</dbReference>
<dbReference type="NCBIfam" id="TIGR00499">
    <property type="entry name" value="lysS_bact"/>
    <property type="match status" value="1"/>
</dbReference>
<dbReference type="PANTHER" id="PTHR42918:SF5">
    <property type="entry name" value="LYSINE--TRNA LIGASE, MITOCHONDRIAL"/>
    <property type="match status" value="1"/>
</dbReference>
<dbReference type="PANTHER" id="PTHR42918">
    <property type="entry name" value="LYSYL-TRNA SYNTHETASE"/>
    <property type="match status" value="1"/>
</dbReference>
<dbReference type="Pfam" id="PF00152">
    <property type="entry name" value="tRNA-synt_2"/>
    <property type="match status" value="1"/>
</dbReference>
<dbReference type="PRINTS" id="PR00982">
    <property type="entry name" value="TRNASYNTHLYS"/>
</dbReference>
<dbReference type="SUPFAM" id="SSF55681">
    <property type="entry name" value="Class II aaRS and biotin synthetases"/>
    <property type="match status" value="1"/>
</dbReference>
<dbReference type="SUPFAM" id="SSF50249">
    <property type="entry name" value="Nucleic acid-binding proteins"/>
    <property type="match status" value="1"/>
</dbReference>
<dbReference type="PROSITE" id="PS50862">
    <property type="entry name" value="AA_TRNA_LIGASE_II"/>
    <property type="match status" value="1"/>
</dbReference>
<feature type="transit peptide" description="Mitochondrion" evidence="1">
    <location>
        <begin position="1"/>
        <end position="30"/>
    </location>
</feature>
<feature type="chain" id="PRO_0000035812" description="Lysine--tRNA ligase, mitochondrial">
    <location>
        <begin position="31"/>
        <end position="576"/>
    </location>
</feature>
<comment type="function">
    <text evidence="3">Catalyzes the attachment of lysine to tRNA(Lys) in the mitochondrion.</text>
</comment>
<comment type="catalytic activity">
    <reaction evidence="5">
        <text>tRNA(Lys) + L-lysine + ATP = L-lysyl-tRNA(Lys) + AMP + diphosphate</text>
        <dbReference type="Rhea" id="RHEA:20792"/>
        <dbReference type="Rhea" id="RHEA-COMP:9696"/>
        <dbReference type="Rhea" id="RHEA-COMP:9697"/>
        <dbReference type="ChEBI" id="CHEBI:30616"/>
        <dbReference type="ChEBI" id="CHEBI:32551"/>
        <dbReference type="ChEBI" id="CHEBI:33019"/>
        <dbReference type="ChEBI" id="CHEBI:78442"/>
        <dbReference type="ChEBI" id="CHEBI:78529"/>
        <dbReference type="ChEBI" id="CHEBI:456215"/>
        <dbReference type="EC" id="6.1.1.6"/>
    </reaction>
    <physiologicalReaction direction="left-to-right" evidence="5">
        <dbReference type="Rhea" id="RHEA:20793"/>
    </physiologicalReaction>
</comment>
<comment type="subcellular location">
    <subcellularLocation>
        <location evidence="3">Mitochondrion matrix</location>
    </subcellularLocation>
</comment>
<comment type="miscellaneous">
    <text evidence="2">Present with 2280 molecules/cell in log phase SD medium.</text>
</comment>
<comment type="similarity">
    <text evidence="4">Belongs to the class-II aminoacyl-tRNA synthetase family.</text>
</comment>
<name>SYKM_YEAST</name>
<organism>
    <name type="scientific">Saccharomyces cerevisiae (strain ATCC 204508 / S288c)</name>
    <name type="common">Baker's yeast</name>
    <dbReference type="NCBI Taxonomy" id="559292"/>
    <lineage>
        <taxon>Eukaryota</taxon>
        <taxon>Fungi</taxon>
        <taxon>Dikarya</taxon>
        <taxon>Ascomycota</taxon>
        <taxon>Saccharomycotina</taxon>
        <taxon>Saccharomycetes</taxon>
        <taxon>Saccharomycetales</taxon>
        <taxon>Saccharomycetaceae</taxon>
        <taxon>Saccharomyces</taxon>
    </lineage>
</organism>
<protein>
    <recommendedName>
        <fullName>Lysine--tRNA ligase, mitochondrial</fullName>
        <ecNumber evidence="5">6.1.1.6</ecNumber>
    </recommendedName>
    <alternativeName>
        <fullName>Lysyl-tRNA synthetase</fullName>
        <shortName>LysRS</shortName>
    </alternativeName>
</protein>
<sequence>MNVLLKRRSLTFAPRWLWCKCRSSRSRPYSLAHAVDTSKMEATRRNGQIVKDLGRYYPSMSESALHDLCQEYKEVTIADFNERFLGNPATLHHEDNPNLLLSINGRIKSIRFSGQKIVFIDLYNGSSGLKNDTQLQLIVNYNKIGGSSEDKANFSEYMNFLKKGDYIKALGYPGFSQSRVKMLSLICNKLPIVLSVSQLPLPSRLNDETKIKSNRVVDYQLNGTQTLLVRARIIKLLRKFLDDRNFVEVETPILSSKSNGAMAKPFITSSKDFDHLELRIAPELWLKRLIISGLQKVYEIGKVFRNEGIDSTHNAEFSTLEFYETYMSMDDIVTRTEDLFKFLITNLQKFFQDTRLPVPKTFSELHLALSENNWKFRKVEFLPTLNKELGIDLMNSGLDINKPSELLKALPKDIAKKYFPSADNTGQLSSLQILNKLSDVFLEQRHCQSTLPTVIYHQPAILSPLAKTDPQNKQVTKRFEVFIKGKEYINAYEEENCPQLQLQKFLQQKQINELTGNKTETLSPVIDYQYVETMKYGMPPVGGFGLGIDRLCMLFCDKKRIEEVLPFGCVDDVNRQ</sequence>
<keyword id="KW-0030">Aminoacyl-tRNA synthetase</keyword>
<keyword id="KW-0067">ATP-binding</keyword>
<keyword id="KW-0436">Ligase</keyword>
<keyword id="KW-0496">Mitochondrion</keyword>
<keyword id="KW-0547">Nucleotide-binding</keyword>
<keyword id="KW-0648">Protein biosynthesis</keyword>
<keyword id="KW-1185">Reference proteome</keyword>
<keyword id="KW-0809">Transit peptide</keyword>
<reference key="1">
    <citation type="journal article" date="1991" name="J. Mol. Biol.">
        <title>Structure and evolution of a group of related aminoacyl-tRNA synthetases.</title>
        <authorList>
            <person name="Gatti D."/>
            <person name="Tzagoloff A."/>
        </authorList>
    </citation>
    <scope>NUCLEOTIDE SEQUENCE [GENOMIC DNA]</scope>
    <scope>FUNCTION</scope>
    <scope>CATALYTIC ACTIVITY</scope>
</reference>
<reference key="2">
    <citation type="submission" date="1994-01" db="EMBL/GenBank/DDBJ databases">
        <authorList>
            <person name="Tzagoloff A."/>
        </authorList>
    </citation>
    <scope>SEQUENCE REVISION</scope>
</reference>
<reference key="3">
    <citation type="journal article" date="1996" name="Yeast">
        <title>Sequencing a cosmid clone of Saccharomyces cerevisiae chromosome XIV reveals 12 new open reading frames (ORFs) and an ancient duplication of six ORFs.</title>
        <authorList>
            <person name="Poehlmann R."/>
            <person name="Philippsen P."/>
        </authorList>
    </citation>
    <scope>NUCLEOTIDE SEQUENCE [GENOMIC DNA]</scope>
    <source>
        <strain>ATCC 96604 / S288c / FY1679</strain>
    </source>
</reference>
<reference key="4">
    <citation type="journal article" date="1997" name="Nature">
        <title>The nucleotide sequence of Saccharomyces cerevisiae chromosome XIV and its evolutionary implications.</title>
        <authorList>
            <person name="Philippsen P."/>
            <person name="Kleine K."/>
            <person name="Poehlmann R."/>
            <person name="Duesterhoeft A."/>
            <person name="Hamberg K."/>
            <person name="Hegemann J.H."/>
            <person name="Obermaier B."/>
            <person name="Urrestarazu L.A."/>
            <person name="Aert R."/>
            <person name="Albermann K."/>
            <person name="Altmann R."/>
            <person name="Andre B."/>
            <person name="Baladron V."/>
            <person name="Ballesta J.P.G."/>
            <person name="Becam A.-M."/>
            <person name="Beinhauer J.D."/>
            <person name="Boskovic J."/>
            <person name="Buitrago M.J."/>
            <person name="Bussereau F."/>
            <person name="Coster F."/>
            <person name="Crouzet M."/>
            <person name="D'Angelo M."/>
            <person name="Dal Pero F."/>
            <person name="De Antoni A."/>
            <person name="del Rey F."/>
            <person name="Doignon F."/>
            <person name="Domdey H."/>
            <person name="Dubois E."/>
            <person name="Fiedler T.A."/>
            <person name="Fleig U."/>
            <person name="Floeth M."/>
            <person name="Fritz C."/>
            <person name="Gaillardin C."/>
            <person name="Garcia-Cantalejo J.M."/>
            <person name="Glansdorff N."/>
            <person name="Goffeau A."/>
            <person name="Gueldener U."/>
            <person name="Herbert C.J."/>
            <person name="Heumann K."/>
            <person name="Heuss-Neitzel D."/>
            <person name="Hilbert H."/>
            <person name="Hinni K."/>
            <person name="Iraqui Houssaini I."/>
            <person name="Jacquet M."/>
            <person name="Jimenez A."/>
            <person name="Jonniaux J.-L."/>
            <person name="Karpfinger-Hartl L."/>
            <person name="Lanfranchi G."/>
            <person name="Lepingle A."/>
            <person name="Levesque H."/>
            <person name="Lyck R."/>
            <person name="Maftahi M."/>
            <person name="Mallet L."/>
            <person name="Maurer C.T.C."/>
            <person name="Messenguy F."/>
            <person name="Mewes H.-W."/>
            <person name="Moestl D."/>
            <person name="Nasr F."/>
            <person name="Nicaud J.-M."/>
            <person name="Niedenthal R.K."/>
            <person name="Pandolfo D."/>
            <person name="Pierard A."/>
            <person name="Piravandi E."/>
            <person name="Planta R.J."/>
            <person name="Pohl T.M."/>
            <person name="Purnelle B."/>
            <person name="Rebischung C."/>
            <person name="Remacha M.A."/>
            <person name="Revuelta J.L."/>
            <person name="Rinke M."/>
            <person name="Saiz J.E."/>
            <person name="Sartorello F."/>
            <person name="Scherens B."/>
            <person name="Sen-Gupta M."/>
            <person name="Soler-Mira A."/>
            <person name="Urbanus J.H.M."/>
            <person name="Valle G."/>
            <person name="Van Dyck L."/>
            <person name="Verhasselt P."/>
            <person name="Vierendeels F."/>
            <person name="Vissers S."/>
            <person name="Voet M."/>
            <person name="Volckaert G."/>
            <person name="Wach A."/>
            <person name="Wambutt R."/>
            <person name="Wedler H."/>
            <person name="Zollner A."/>
            <person name="Hani J."/>
        </authorList>
    </citation>
    <scope>NUCLEOTIDE SEQUENCE [LARGE SCALE GENOMIC DNA]</scope>
    <source>
        <strain>ATCC 204508 / S288c</strain>
    </source>
</reference>
<reference key="5">
    <citation type="journal article" date="2014" name="G3 (Bethesda)">
        <title>The reference genome sequence of Saccharomyces cerevisiae: Then and now.</title>
        <authorList>
            <person name="Engel S.R."/>
            <person name="Dietrich F.S."/>
            <person name="Fisk D.G."/>
            <person name="Binkley G."/>
            <person name="Balakrishnan R."/>
            <person name="Costanzo M.C."/>
            <person name="Dwight S.S."/>
            <person name="Hitz B.C."/>
            <person name="Karra K."/>
            <person name="Nash R.S."/>
            <person name="Weng S."/>
            <person name="Wong E.D."/>
            <person name="Lloyd P."/>
            <person name="Skrzypek M.S."/>
            <person name="Miyasato S.R."/>
            <person name="Simison M."/>
            <person name="Cherry J.M."/>
        </authorList>
    </citation>
    <scope>GENOME REANNOTATION</scope>
    <source>
        <strain>ATCC 204508 / S288c</strain>
    </source>
</reference>
<reference key="6">
    <citation type="journal article" date="2003" name="Nature">
        <title>Global analysis of protein expression in yeast.</title>
        <authorList>
            <person name="Ghaemmaghami S."/>
            <person name="Huh W.-K."/>
            <person name="Bower K."/>
            <person name="Howson R.W."/>
            <person name="Belle A."/>
            <person name="Dephoure N."/>
            <person name="O'Shea E.K."/>
            <person name="Weissman J.S."/>
        </authorList>
    </citation>
    <scope>LEVEL OF PROTEIN EXPRESSION [LARGE SCALE ANALYSIS]</scope>
</reference>